<keyword id="KW-0238">DNA-binding</keyword>
<keyword id="KW-0678">Repressor</keyword>
<keyword id="KW-0749">Sporulation</keyword>
<keyword id="KW-0804">Transcription</keyword>
<keyword id="KW-0805">Transcription regulation</keyword>
<dbReference type="EMBL" id="CP000557">
    <property type="protein sequence ID" value="ABO65943.1"/>
    <property type="molecule type" value="Genomic_DNA"/>
</dbReference>
<dbReference type="RefSeq" id="WP_011886866.1">
    <property type="nucleotide sequence ID" value="NC_009328.1"/>
</dbReference>
<dbReference type="SMR" id="A4IKT9"/>
<dbReference type="KEGG" id="gtn:GTNG_0561"/>
<dbReference type="eggNOG" id="COG1846">
    <property type="taxonomic scope" value="Bacteria"/>
</dbReference>
<dbReference type="HOGENOM" id="CLU_115790_0_0_9"/>
<dbReference type="Proteomes" id="UP000001578">
    <property type="component" value="Chromosome"/>
</dbReference>
<dbReference type="GO" id="GO:0003677">
    <property type="term" value="F:DNA binding"/>
    <property type="evidence" value="ECO:0007669"/>
    <property type="project" value="UniProtKB-UniRule"/>
</dbReference>
<dbReference type="GO" id="GO:0003700">
    <property type="term" value="F:DNA-binding transcription factor activity"/>
    <property type="evidence" value="ECO:0007669"/>
    <property type="project" value="UniProtKB-UniRule"/>
</dbReference>
<dbReference type="GO" id="GO:0045892">
    <property type="term" value="P:negative regulation of DNA-templated transcription"/>
    <property type="evidence" value="ECO:0007669"/>
    <property type="project" value="UniProtKB-UniRule"/>
</dbReference>
<dbReference type="GO" id="GO:0006950">
    <property type="term" value="P:response to stress"/>
    <property type="evidence" value="ECO:0007669"/>
    <property type="project" value="TreeGrafter"/>
</dbReference>
<dbReference type="GO" id="GO:0030435">
    <property type="term" value="P:sporulation resulting in formation of a cellular spore"/>
    <property type="evidence" value="ECO:0007669"/>
    <property type="project" value="UniProtKB-UniRule"/>
</dbReference>
<dbReference type="FunFam" id="1.10.10.10:FF:000194">
    <property type="entry name" value="HTH-type transcriptional regulator Hpr"/>
    <property type="match status" value="1"/>
</dbReference>
<dbReference type="Gene3D" id="1.10.10.10">
    <property type="entry name" value="Winged helix-like DNA-binding domain superfamily/Winged helix DNA-binding domain"/>
    <property type="match status" value="1"/>
</dbReference>
<dbReference type="HAMAP" id="MF_01911">
    <property type="entry name" value="HTH_type_Hpr"/>
    <property type="match status" value="1"/>
</dbReference>
<dbReference type="InterPro" id="IPR000835">
    <property type="entry name" value="HTH_MarR-typ"/>
</dbReference>
<dbReference type="InterPro" id="IPR023488">
    <property type="entry name" value="HTH_tscrpt_reg_Hpr"/>
</dbReference>
<dbReference type="InterPro" id="IPR039422">
    <property type="entry name" value="MarR/SlyA-like"/>
</dbReference>
<dbReference type="InterPro" id="IPR023187">
    <property type="entry name" value="Tscrpt_reg_MarR-type_CS"/>
</dbReference>
<dbReference type="InterPro" id="IPR036388">
    <property type="entry name" value="WH-like_DNA-bd_sf"/>
</dbReference>
<dbReference type="InterPro" id="IPR036390">
    <property type="entry name" value="WH_DNA-bd_sf"/>
</dbReference>
<dbReference type="NCBIfam" id="NF010349">
    <property type="entry name" value="PRK13777.1"/>
    <property type="match status" value="1"/>
</dbReference>
<dbReference type="PANTHER" id="PTHR33164:SF58">
    <property type="entry name" value="DNA-BINDING TRANSCRIPTIONAL REPRESSOR SCOC"/>
    <property type="match status" value="1"/>
</dbReference>
<dbReference type="PANTHER" id="PTHR33164">
    <property type="entry name" value="TRANSCRIPTIONAL REGULATOR, MARR FAMILY"/>
    <property type="match status" value="1"/>
</dbReference>
<dbReference type="Pfam" id="PF01047">
    <property type="entry name" value="MarR"/>
    <property type="match status" value="1"/>
</dbReference>
<dbReference type="SMART" id="SM00347">
    <property type="entry name" value="HTH_MARR"/>
    <property type="match status" value="1"/>
</dbReference>
<dbReference type="SUPFAM" id="SSF46785">
    <property type="entry name" value="Winged helix' DNA-binding domain"/>
    <property type="match status" value="1"/>
</dbReference>
<dbReference type="PROSITE" id="PS01117">
    <property type="entry name" value="HTH_MARR_1"/>
    <property type="match status" value="1"/>
</dbReference>
<dbReference type="PROSITE" id="PS50995">
    <property type="entry name" value="HTH_MARR_2"/>
    <property type="match status" value="1"/>
</dbReference>
<gene>
    <name evidence="1" type="primary">hpr</name>
    <name type="ordered locus">GTNG_0561</name>
</gene>
<feature type="chain" id="PRO_0000343631" description="HTH-type transcriptional regulator Hpr">
    <location>
        <begin position="1"/>
        <end position="200"/>
    </location>
</feature>
<feature type="domain" description="HTH marR-type" evidence="1">
    <location>
        <begin position="13"/>
        <end position="157"/>
    </location>
</feature>
<feature type="DNA-binding region" description="H-T-H motif" evidence="1">
    <location>
        <begin position="63"/>
        <end position="86"/>
    </location>
</feature>
<proteinExistence type="inferred from homology"/>
<reference key="1">
    <citation type="journal article" date="2007" name="Proc. Natl. Acad. Sci. U.S.A.">
        <title>Genome and proteome of long-chain alkane degrading Geobacillus thermodenitrificans NG80-2 isolated from a deep-subsurface oil reservoir.</title>
        <authorList>
            <person name="Feng L."/>
            <person name="Wang W."/>
            <person name="Cheng J."/>
            <person name="Ren Y."/>
            <person name="Zhao G."/>
            <person name="Gao C."/>
            <person name="Tang Y."/>
            <person name="Liu X."/>
            <person name="Han W."/>
            <person name="Peng X."/>
            <person name="Liu R."/>
            <person name="Wang L."/>
        </authorList>
    </citation>
    <scope>NUCLEOTIDE SEQUENCE [LARGE SCALE GENOMIC DNA]</scope>
    <source>
        <strain>NG80-2</strain>
    </source>
</reference>
<evidence type="ECO:0000255" key="1">
    <source>
        <dbReference type="HAMAP-Rule" id="MF_01911"/>
    </source>
</evidence>
<protein>
    <recommendedName>
        <fullName evidence="1">HTH-type transcriptional regulator Hpr</fullName>
    </recommendedName>
    <alternativeName>
        <fullName evidence="1">Protease production regulatory protein Hpr</fullName>
    </alternativeName>
</protein>
<organism>
    <name type="scientific">Geobacillus thermodenitrificans (strain NG80-2)</name>
    <dbReference type="NCBI Taxonomy" id="420246"/>
    <lineage>
        <taxon>Bacteria</taxon>
        <taxon>Bacillati</taxon>
        <taxon>Bacillota</taxon>
        <taxon>Bacilli</taxon>
        <taxon>Bacillales</taxon>
        <taxon>Anoxybacillaceae</taxon>
        <taxon>Geobacillus</taxon>
    </lineage>
</organism>
<comment type="function">
    <text evidence="1">Negative regulator of protease production and sporulation.</text>
</comment>
<comment type="subunit">
    <text evidence="1">Homodimer.</text>
</comment>
<sequence>MKSTEQHYSIKEAMLFSQRIAQLSKALWKSIEKDWQQWIKPFNLNINEHHILWIAYHFKGASISEIAKFGVMHVSTAFNFSKKLEEKGLLSFSKKQDDKRNTYIELTEKGEEVLMKLMETYDPTRNAVFNGALPLRELYGKFPEILEMMCIVRNIYGDDFMEIFERAFENIKEDFVEQDGKLVKRAPKAEEHEKELASPG</sequence>
<accession>A4IKT9</accession>
<name>HPR_GEOTN</name>